<sequence>MEVRASFQKVSGSSDSVATLNSEEFVLVSQHTDATSIKDDGKPQLKIASNGDEQLEKAMEEILRDSEKGQSGLPVDCQGSSEISDCPFGDVPASQTTKPPLQLILDPSNTEISTPRPSSPSRFPEEDSVLFNKLTYLGCMKVSSPRSEVEALRAMATMRASSQYPFAVTLYVPNVPEGSVRIIDQSSNVEIASFPIYKVLFCARGHDGTAESNCFAFTESSHGSEEFQIHVFSCEIKEAVSRILYSFCTAFKRSSRQVSDVKDSVIPTPDSDVFTFSVSLEVKEDDGKGNFSPVPKDRDKFYFKIKQGIEKKVVITVQQLSNKELAIERCFGMLLSPGRNVKNSDMHLLDMESMGKSYDGRAYVITGMWNPNAPIFLALNEETPKDKRVYMTVAVDMVVTEVVEPVRFLLETVVRVYPANERFWYFSRKTFTETFFMRLKQSEGKGHSSAGDAIYEVVSLQRESDKEEPITPTSAGGPMSPQEDEAEEESDNELSSGTGDVSKDCPEKILYSWGELLGRWHNNLGGRPKGLFTLVKSGVPEALRAEVWQLLAGCHDNQEMLDKYRILITKDSAQESVITRDIHRTFPAHDYFKDTGGDGQESLYKICKAYSVFDEDIGYCQGQSFLAAVLLLHMPEEQAFCVLVTIMYGYKLRDLYRNNFEDLHCKFYQLEKLMQEQLPDLYSHFCDLNLEAHMYASQWFLTLFTAKFPLCMVFHIIDLLLCEGLNIIFHVALALLKTSKEDLLQADFEGALKFFRVQLPKRYRAEENARRLMEQACNIKVPTKKLKKYEKEYQAMRENQLQQEDPMDRYKFVYL</sequence>
<reference evidence="14 19" key="1">
    <citation type="journal article" date="2005" name="Science">
        <title>The transcriptional landscape of the mammalian genome.</title>
        <authorList>
            <person name="Carninci P."/>
            <person name="Kasukawa T."/>
            <person name="Katayama S."/>
            <person name="Gough J."/>
            <person name="Frith M.C."/>
            <person name="Maeda N."/>
            <person name="Oyama R."/>
            <person name="Ravasi T."/>
            <person name="Lenhard B."/>
            <person name="Wells C."/>
            <person name="Kodzius R."/>
            <person name="Shimokawa K."/>
            <person name="Bajic V.B."/>
            <person name="Brenner S.E."/>
            <person name="Batalov S."/>
            <person name="Forrest A.R."/>
            <person name="Zavolan M."/>
            <person name="Davis M.J."/>
            <person name="Wilming L.G."/>
            <person name="Aidinis V."/>
            <person name="Allen J.E."/>
            <person name="Ambesi-Impiombato A."/>
            <person name="Apweiler R."/>
            <person name="Aturaliya R.N."/>
            <person name="Bailey T.L."/>
            <person name="Bansal M."/>
            <person name="Baxter L."/>
            <person name="Beisel K.W."/>
            <person name="Bersano T."/>
            <person name="Bono H."/>
            <person name="Chalk A.M."/>
            <person name="Chiu K.P."/>
            <person name="Choudhary V."/>
            <person name="Christoffels A."/>
            <person name="Clutterbuck D.R."/>
            <person name="Crowe M.L."/>
            <person name="Dalla E."/>
            <person name="Dalrymple B.P."/>
            <person name="de Bono B."/>
            <person name="Della Gatta G."/>
            <person name="di Bernardo D."/>
            <person name="Down T."/>
            <person name="Engstrom P."/>
            <person name="Fagiolini M."/>
            <person name="Faulkner G."/>
            <person name="Fletcher C.F."/>
            <person name="Fukushima T."/>
            <person name="Furuno M."/>
            <person name="Futaki S."/>
            <person name="Gariboldi M."/>
            <person name="Georgii-Hemming P."/>
            <person name="Gingeras T.R."/>
            <person name="Gojobori T."/>
            <person name="Green R.E."/>
            <person name="Gustincich S."/>
            <person name="Harbers M."/>
            <person name="Hayashi Y."/>
            <person name="Hensch T.K."/>
            <person name="Hirokawa N."/>
            <person name="Hill D."/>
            <person name="Huminiecki L."/>
            <person name="Iacono M."/>
            <person name="Ikeo K."/>
            <person name="Iwama A."/>
            <person name="Ishikawa T."/>
            <person name="Jakt M."/>
            <person name="Kanapin A."/>
            <person name="Katoh M."/>
            <person name="Kawasawa Y."/>
            <person name="Kelso J."/>
            <person name="Kitamura H."/>
            <person name="Kitano H."/>
            <person name="Kollias G."/>
            <person name="Krishnan S.P."/>
            <person name="Kruger A."/>
            <person name="Kummerfeld S.K."/>
            <person name="Kurochkin I.V."/>
            <person name="Lareau L.F."/>
            <person name="Lazarevic D."/>
            <person name="Lipovich L."/>
            <person name="Liu J."/>
            <person name="Liuni S."/>
            <person name="McWilliam S."/>
            <person name="Madan Babu M."/>
            <person name="Madera M."/>
            <person name="Marchionni L."/>
            <person name="Matsuda H."/>
            <person name="Matsuzawa S."/>
            <person name="Miki H."/>
            <person name="Mignone F."/>
            <person name="Miyake S."/>
            <person name="Morris K."/>
            <person name="Mottagui-Tabar S."/>
            <person name="Mulder N."/>
            <person name="Nakano N."/>
            <person name="Nakauchi H."/>
            <person name="Ng P."/>
            <person name="Nilsson R."/>
            <person name="Nishiguchi S."/>
            <person name="Nishikawa S."/>
            <person name="Nori F."/>
            <person name="Ohara O."/>
            <person name="Okazaki Y."/>
            <person name="Orlando V."/>
            <person name="Pang K.C."/>
            <person name="Pavan W.J."/>
            <person name="Pavesi G."/>
            <person name="Pesole G."/>
            <person name="Petrovsky N."/>
            <person name="Piazza S."/>
            <person name="Reed J."/>
            <person name="Reid J.F."/>
            <person name="Ring B.Z."/>
            <person name="Ringwald M."/>
            <person name="Rost B."/>
            <person name="Ruan Y."/>
            <person name="Salzberg S.L."/>
            <person name="Sandelin A."/>
            <person name="Schneider C."/>
            <person name="Schoenbach C."/>
            <person name="Sekiguchi K."/>
            <person name="Semple C.A."/>
            <person name="Seno S."/>
            <person name="Sessa L."/>
            <person name="Sheng Y."/>
            <person name="Shibata Y."/>
            <person name="Shimada H."/>
            <person name="Shimada K."/>
            <person name="Silva D."/>
            <person name="Sinclair B."/>
            <person name="Sperling S."/>
            <person name="Stupka E."/>
            <person name="Sugiura K."/>
            <person name="Sultana R."/>
            <person name="Takenaka Y."/>
            <person name="Taki K."/>
            <person name="Tammoja K."/>
            <person name="Tan S.L."/>
            <person name="Tang S."/>
            <person name="Taylor M.S."/>
            <person name="Tegner J."/>
            <person name="Teichmann S.A."/>
            <person name="Ueda H.R."/>
            <person name="van Nimwegen E."/>
            <person name="Verardo R."/>
            <person name="Wei C.L."/>
            <person name="Yagi K."/>
            <person name="Yamanishi H."/>
            <person name="Zabarovsky E."/>
            <person name="Zhu S."/>
            <person name="Zimmer A."/>
            <person name="Hide W."/>
            <person name="Bult C."/>
            <person name="Grimmond S.M."/>
            <person name="Teasdale R.D."/>
            <person name="Liu E.T."/>
            <person name="Brusic V."/>
            <person name="Quackenbush J."/>
            <person name="Wahlestedt C."/>
            <person name="Mattick J.S."/>
            <person name="Hume D.A."/>
            <person name="Kai C."/>
            <person name="Sasaki D."/>
            <person name="Tomaru Y."/>
            <person name="Fukuda S."/>
            <person name="Kanamori-Katayama M."/>
            <person name="Suzuki M."/>
            <person name="Aoki J."/>
            <person name="Arakawa T."/>
            <person name="Iida J."/>
            <person name="Imamura K."/>
            <person name="Itoh M."/>
            <person name="Kato T."/>
            <person name="Kawaji H."/>
            <person name="Kawagashira N."/>
            <person name="Kawashima T."/>
            <person name="Kojima M."/>
            <person name="Kondo S."/>
            <person name="Konno H."/>
            <person name="Nakano K."/>
            <person name="Ninomiya N."/>
            <person name="Nishio T."/>
            <person name="Okada M."/>
            <person name="Plessy C."/>
            <person name="Shibata K."/>
            <person name="Shiraki T."/>
            <person name="Suzuki S."/>
            <person name="Tagami M."/>
            <person name="Waki K."/>
            <person name="Watahiki A."/>
            <person name="Okamura-Oho Y."/>
            <person name="Suzuki H."/>
            <person name="Kawai J."/>
            <person name="Hayashizaki Y."/>
        </authorList>
    </citation>
    <scope>NUCLEOTIDE SEQUENCE [LARGE SCALE MRNA] (ISOFORMS 1; 2 AND 3)</scope>
    <source>
        <strain evidence="19">C57BL/6J</strain>
        <tissue evidence="21">Brain</tissue>
        <tissue evidence="19">Cerebellum</tissue>
        <tissue evidence="18">Diencephalon</tissue>
    </source>
</reference>
<reference evidence="14 17" key="2">
    <citation type="journal article" date="2004" name="Genome Res.">
        <title>The status, quality, and expansion of the NIH full-length cDNA project: the Mammalian Gene Collection (MGC).</title>
        <authorList>
            <consortium name="The MGC Project Team"/>
        </authorList>
    </citation>
    <scope>NUCLEOTIDE SEQUENCE [LARGE SCALE MRNA] (ISOFORMS 1 AND 4)</scope>
    <source>
        <strain evidence="16">C57BL/6J</strain>
        <tissue evidence="17">Brain</tissue>
        <tissue evidence="16">Thymus</tissue>
    </source>
</reference>
<reference evidence="14 15" key="3">
    <citation type="journal article" date="2000" name="Mech. Dev.">
        <title>Gene trapping of two novel genes, Hzf and Hhl, expressed in hematopoietic cells.</title>
        <authorList>
            <person name="Hidaka M."/>
            <person name="Caruana G."/>
            <person name="Stanford W.L."/>
            <person name="Sam M."/>
            <person name="Correll P.H."/>
            <person name="Bernstein A."/>
        </authorList>
    </citation>
    <scope>NUCLEOTIDE SEQUENCE [MRNA] OF 1-386 (ISOFORMS 1/3)</scope>
    <scope>TISSUE SPECIFICITY</scope>
    <source>
        <strain evidence="15">CD-1 X 129/Sv</strain>
        <tissue evidence="15">Embryonic stem cell</tissue>
    </source>
</reference>
<reference evidence="14 20" key="4">
    <citation type="journal article" date="2003" name="DNA Res.">
        <title>Prediction of the coding sequences of mouse homologues of KIAA gene: II. The complete nucleotide sequences of 400 mouse KIAA-homologous cDNAs identified by screening of terminal sequences of cDNA clones randomly sampled from size-fractionated libraries.</title>
        <authorList>
            <person name="Okazaki N."/>
            <person name="Kikuno R."/>
            <person name="Ohara R."/>
            <person name="Inamoto S."/>
            <person name="Aizawa H."/>
            <person name="Yuasa S."/>
            <person name="Nakajima D."/>
            <person name="Nagase T."/>
            <person name="Ohara O."/>
            <person name="Koga H."/>
        </authorList>
    </citation>
    <scope>NUCLEOTIDE SEQUENCE [LARGE SCALE MRNA] OF 790-815 (ISOFORM 3)</scope>
    <source>
        <tissue evidence="20">Brain</tissue>
    </source>
</reference>
<reference key="5">
    <citation type="journal article" date="2007" name="Proc. Natl. Acad. Sci. U.S.A.">
        <title>Large-scale phosphorylation analysis of mouse liver.</title>
        <authorList>
            <person name="Villen J."/>
            <person name="Beausoleil S.A."/>
            <person name="Gerber S.A."/>
            <person name="Gygi S.P."/>
        </authorList>
    </citation>
    <scope>IDENTIFICATION BY MASS SPECTROMETRY [LARGE SCALE ANALYSIS]</scope>
    <source>
        <tissue>Liver</tissue>
    </source>
</reference>
<reference key="6">
    <citation type="journal article" date="2010" name="Cell">
        <title>A tissue-specific atlas of mouse protein phosphorylation and expression.</title>
        <authorList>
            <person name="Huttlin E.L."/>
            <person name="Jedrychowski M.P."/>
            <person name="Elias J.E."/>
            <person name="Goswami T."/>
            <person name="Rad R."/>
            <person name="Beausoleil S.A."/>
            <person name="Villen J."/>
            <person name="Haas W."/>
            <person name="Sowa M.E."/>
            <person name="Gygi S.P."/>
        </authorList>
    </citation>
    <scope>PHOSPHORYLATION [LARGE SCALE ANALYSIS] AT SER-490</scope>
    <scope>IDENTIFICATION BY MASS SPECTROMETRY [LARGE SCALE ANALYSIS]</scope>
    <source>
        <tissue>Brain</tissue>
        <tissue>Heart</tissue>
        <tissue>Kidney</tissue>
        <tissue>Liver</tissue>
        <tissue>Lung</tissue>
        <tissue>Pancreas</tissue>
        <tissue>Spleen</tissue>
        <tissue>Testis</tissue>
    </source>
</reference>
<reference key="7">
    <citation type="journal article" date="2016" name="Elife">
        <title>Ankyrin-B is a PI3P effector that promotes polarized alpha5beta1-integrin recycling via recruiting RabGAP1L to early endosomes.</title>
        <authorList>
            <person name="Qu F."/>
            <person name="Lorenzo D.N."/>
            <person name="King S.J."/>
            <person name="Brooks R."/>
            <person name="Bear J.E."/>
            <person name="Bennett V."/>
        </authorList>
    </citation>
    <scope>FUNCTION</scope>
    <scope>INTERACTION WITH ANK2</scope>
    <scope>SUBCELLULAR LOCATION</scope>
    <scope>TISSUE SPECIFICITY</scope>
    <scope>MUTAGENESIS OF ARG-584 AND 784-LYS-LYS-785</scope>
</reference>
<evidence type="ECO:0000250" key="1"/>
<evidence type="ECO:0000250" key="2">
    <source>
        <dbReference type="UniProtKB" id="Q5R372"/>
    </source>
</evidence>
<evidence type="ECO:0000255" key="3">
    <source>
        <dbReference type="PROSITE-ProRule" id="PRU00148"/>
    </source>
</evidence>
<evidence type="ECO:0000255" key="4">
    <source>
        <dbReference type="PROSITE-ProRule" id="PRU00163"/>
    </source>
</evidence>
<evidence type="ECO:0000256" key="5">
    <source>
        <dbReference type="SAM" id="MobiDB-lite"/>
    </source>
</evidence>
<evidence type="ECO:0000269" key="6">
    <source>
    </source>
</evidence>
<evidence type="ECO:0000269" key="7">
    <source>
    </source>
</evidence>
<evidence type="ECO:0000269" key="8">
    <source>
    </source>
</evidence>
<evidence type="ECO:0000269" key="9">
    <source>
    </source>
</evidence>
<evidence type="ECO:0000269" key="10">
    <source>
    </source>
</evidence>
<evidence type="ECO:0000303" key="11">
    <source>
    </source>
</evidence>
<evidence type="ECO:0000303" key="12">
    <source>
    </source>
</evidence>
<evidence type="ECO:0000303" key="13">
    <source>
    </source>
</evidence>
<evidence type="ECO:0000305" key="14"/>
<evidence type="ECO:0000312" key="15">
    <source>
        <dbReference type="EMBL" id="AAF24092.1"/>
    </source>
</evidence>
<evidence type="ECO:0000312" key="16">
    <source>
        <dbReference type="EMBL" id="AAH38651.1"/>
    </source>
</evidence>
<evidence type="ECO:0000312" key="17">
    <source>
        <dbReference type="EMBL" id="AAI45812.1"/>
    </source>
</evidence>
<evidence type="ECO:0000312" key="18">
    <source>
        <dbReference type="EMBL" id="BAC28549.1"/>
    </source>
</evidence>
<evidence type="ECO:0000312" key="19">
    <source>
        <dbReference type="EMBL" id="BAC29189.1"/>
    </source>
</evidence>
<evidence type="ECO:0000312" key="20">
    <source>
        <dbReference type="EMBL" id="BAC65574.1"/>
    </source>
</evidence>
<evidence type="ECO:0000312" key="21">
    <source>
        <dbReference type="EMBL" id="BAE28037.1"/>
    </source>
</evidence>
<evidence type="ECO:0000312" key="22">
    <source>
        <dbReference type="MGI" id="MGI:1352507"/>
    </source>
</evidence>
<evidence type="ECO:0007744" key="23">
    <source>
    </source>
</evidence>
<gene>
    <name evidence="22" type="primary">Rabgap1l</name>
    <name evidence="15" type="synonym">Hhl</name>
    <name evidence="20" type="synonym">Kiaa0471</name>
</gene>
<keyword id="KW-0025">Alternative splicing</keyword>
<keyword id="KW-0254">Endocytosis</keyword>
<keyword id="KW-0967">Endosome</keyword>
<keyword id="KW-0333">Golgi apparatus</keyword>
<keyword id="KW-0343">GTPase activation</keyword>
<keyword id="KW-0597">Phosphoprotein</keyword>
<keyword id="KW-0653">Protein transport</keyword>
<keyword id="KW-1185">Reference proteome</keyword>
<keyword id="KW-0813">Transport</keyword>
<protein>
    <recommendedName>
        <fullName>Rab GTPase-activating protein 1-like</fullName>
    </recommendedName>
</protein>
<comment type="function">
    <text evidence="2 10">GTP-hydrolysis activating protein (GAP) for small GTPase RAB22A, converting active RAB22A-GTP to the inactive form RAB22A-GDP (By similarity). Plays a role in endocytosis and intracellular protein transport. Recruited by ANK2 to phosphatidylinositol 3-phosphate (PI3P)-positive early endosomes, where it inactivates RAB22A, and promotes polarized trafficking to the leading edge of the migrating cells. Part of the ANK2/RABGAP1L complex which is required for the polarized recycling of fibronectin receptor ITGA5 ITGB1 to the plasma membrane that enables continuous directional cell migration (PubMed:27718357).</text>
</comment>
<comment type="subunit">
    <text evidence="10">Interacts (via Rab-GAP TBC domain) with ANK2 (via death domain).</text>
</comment>
<comment type="subcellular location">
    <subcellularLocation>
        <location evidence="10">Early endosome</location>
    </subcellularLocation>
    <subcellularLocation>
        <location evidence="2">Golgi apparatus</location>
    </subcellularLocation>
    <text evidence="2 10">Colocalizes on endosomes partially with EEA1 (By similarity). Colocalizes and cotransports on motile vesicles with ANK2 (PubMed:27718357).</text>
</comment>
<comment type="alternative products">
    <event type="alternative splicing"/>
    <isoform>
        <id>A6H6A9-1</id>
        <name evidence="8 9">1</name>
        <sequence type="displayed"/>
    </isoform>
    <isoform>
        <id>A6H6A9-2</id>
        <name evidence="9">2</name>
        <sequence type="described" ref="VSP_052927 VSP_052928 VSP_052929"/>
    </isoform>
    <isoform>
        <id>A6H6A9-3</id>
        <name evidence="7 9">3</name>
        <sequence type="described" ref="VSP_052926 VSP_052930 VSP_052932"/>
    </isoform>
    <isoform>
        <id>A6H6A9-4</id>
        <name evidence="8">4</name>
        <sequence type="described" ref="VSP_052925 VSP_052931"/>
    </isoform>
</comment>
<comment type="tissue specificity">
    <text evidence="6 10">Expressed in embryonic heart and liver, and in hemopoietic cells (PubMed:10585558). Expressed in the corpus callosum in the central nervous system (CNS) and costameres in skeletal muscle at postnatal day (PND) 30 (PubMed:27718357).</text>
</comment>
<comment type="domain">
    <text evidence="1">The arginine and glutamine fingers are critical for the GTPase-activating mechanism, they pull out Rab's 'switch 2' glutamine and insert in Rab's active site.</text>
</comment>
<comment type="sequence caution" evidence="14">
    <conflict type="erroneous initiation">
        <sequence resource="EMBL-CDS" id="AAF24092"/>
    </conflict>
    <text>Truncated N-terminus.</text>
</comment>
<comment type="sequence caution" evidence="14">
    <conflict type="frameshift">
        <sequence resource="EMBL-CDS" id="AAF24092"/>
    </conflict>
</comment>
<comment type="sequence caution" evidence="14">
    <conflict type="miscellaneous discrepancy">
        <sequence resource="EMBL-CDS" id="AAF24092"/>
    </conflict>
    <text>Contaminating sequence. Potential poly-A sequence.</text>
</comment>
<proteinExistence type="evidence at protein level"/>
<organism>
    <name type="scientific">Mus musculus</name>
    <name type="common">Mouse</name>
    <dbReference type="NCBI Taxonomy" id="10090"/>
    <lineage>
        <taxon>Eukaryota</taxon>
        <taxon>Metazoa</taxon>
        <taxon>Chordata</taxon>
        <taxon>Craniata</taxon>
        <taxon>Vertebrata</taxon>
        <taxon>Euteleostomi</taxon>
        <taxon>Mammalia</taxon>
        <taxon>Eutheria</taxon>
        <taxon>Euarchontoglires</taxon>
        <taxon>Glires</taxon>
        <taxon>Rodentia</taxon>
        <taxon>Myomorpha</taxon>
        <taxon>Muroidea</taxon>
        <taxon>Muridae</taxon>
        <taxon>Murinae</taxon>
        <taxon>Mus</taxon>
        <taxon>Mus</taxon>
    </lineage>
</organism>
<name>RBG1L_MOUSE</name>
<accession>A6H6A9</accession>
<accession>Q3UH20</accession>
<accession>Q80TZ4</accession>
<accession>Q8BZD2</accession>
<accession>Q8BZP0</accession>
<accession>Q8CFI6</accession>
<accession>Q9QY69</accession>
<dbReference type="EMBL" id="AK034019">
    <property type="protein sequence ID" value="BAC28549.1"/>
    <property type="molecule type" value="mRNA"/>
</dbReference>
<dbReference type="EMBL" id="AK035796">
    <property type="protein sequence ID" value="BAC29189.1"/>
    <property type="molecule type" value="mRNA"/>
</dbReference>
<dbReference type="EMBL" id="AK147634">
    <property type="protein sequence ID" value="BAE28037.1"/>
    <property type="molecule type" value="mRNA"/>
</dbReference>
<dbReference type="EMBL" id="BC038651">
    <property type="protein sequence ID" value="AAH38651.1"/>
    <property type="molecule type" value="mRNA"/>
</dbReference>
<dbReference type="EMBL" id="BC145811">
    <property type="protein sequence ID" value="AAI45812.1"/>
    <property type="molecule type" value="mRNA"/>
</dbReference>
<dbReference type="EMBL" id="BC145813">
    <property type="protein sequence ID" value="AAI45814.1"/>
    <property type="molecule type" value="mRNA"/>
</dbReference>
<dbReference type="EMBL" id="AF118565">
    <property type="protein sequence ID" value="AAF24092.1"/>
    <property type="status" value="ALT_SEQ"/>
    <property type="molecule type" value="mRNA"/>
</dbReference>
<dbReference type="EMBL" id="AK122292">
    <property type="protein sequence ID" value="BAC65574.1"/>
    <property type="molecule type" value="mRNA"/>
</dbReference>
<dbReference type="CCDS" id="CCDS15407.1">
    <molecule id="A6H6A9-3"/>
</dbReference>
<dbReference type="CCDS" id="CCDS15408.1">
    <molecule id="A6H6A9-1"/>
</dbReference>
<dbReference type="RefSeq" id="NP_001033710.1">
    <molecule id="A6H6A9-3"/>
    <property type="nucleotide sequence ID" value="NM_001038621.2"/>
</dbReference>
<dbReference type="RefSeq" id="NP_038890.3">
    <molecule id="A6H6A9-1"/>
    <property type="nucleotide sequence ID" value="NM_013862.5"/>
</dbReference>
<dbReference type="RefSeq" id="XP_006496946.1">
    <molecule id="A6H6A9-4"/>
    <property type="nucleotide sequence ID" value="XM_006496883.5"/>
</dbReference>
<dbReference type="SMR" id="A6H6A9"/>
<dbReference type="BioGRID" id="205890">
    <property type="interactions" value="2"/>
</dbReference>
<dbReference type="FunCoup" id="A6H6A9">
    <property type="interactions" value="3711"/>
</dbReference>
<dbReference type="STRING" id="10090.ENSMUSP00000028049"/>
<dbReference type="GlyGen" id="A6H6A9">
    <property type="glycosylation" value="1 site"/>
</dbReference>
<dbReference type="iPTMnet" id="A6H6A9"/>
<dbReference type="PhosphoSitePlus" id="A6H6A9"/>
<dbReference type="SwissPalm" id="A6H6A9"/>
<dbReference type="jPOST" id="A6H6A9"/>
<dbReference type="PaxDb" id="10090-ENSMUSP00000028049"/>
<dbReference type="PeptideAtlas" id="A6H6A9"/>
<dbReference type="ProteomicsDB" id="255032">
    <molecule id="A6H6A9-1"/>
</dbReference>
<dbReference type="ProteomicsDB" id="255033">
    <molecule id="A6H6A9-2"/>
</dbReference>
<dbReference type="ProteomicsDB" id="255034">
    <molecule id="A6H6A9-3"/>
</dbReference>
<dbReference type="ProteomicsDB" id="255035">
    <molecule id="A6H6A9-4"/>
</dbReference>
<dbReference type="Pumba" id="A6H6A9"/>
<dbReference type="Antibodypedia" id="34402">
    <property type="antibodies" value="77 antibodies from 20 providers"/>
</dbReference>
<dbReference type="DNASU" id="29809"/>
<dbReference type="Ensembl" id="ENSMUST00000028049.13">
    <molecule id="A6H6A9-1"/>
    <property type="protein sequence ID" value="ENSMUSP00000028049.8"/>
    <property type="gene ID" value="ENSMUSG00000026721.17"/>
</dbReference>
<dbReference type="Ensembl" id="ENSMUST00000028052.12">
    <molecule id="A6H6A9-3"/>
    <property type="protein sequence ID" value="ENSMUSP00000028052.6"/>
    <property type="gene ID" value="ENSMUSG00000026721.17"/>
</dbReference>
<dbReference type="Ensembl" id="ENSMUST00000195442.6">
    <molecule id="A6H6A9-2"/>
    <property type="protein sequence ID" value="ENSMUSP00000141666.2"/>
    <property type="gene ID" value="ENSMUSG00000026721.17"/>
</dbReference>
<dbReference type="GeneID" id="29809"/>
<dbReference type="KEGG" id="mmu:29809"/>
<dbReference type="UCSC" id="uc007deh.1">
    <molecule id="A6H6A9-3"/>
    <property type="organism name" value="mouse"/>
</dbReference>
<dbReference type="UCSC" id="uc007dej.2">
    <molecule id="A6H6A9-1"/>
    <property type="organism name" value="mouse"/>
</dbReference>
<dbReference type="UCSC" id="uc007dek.1">
    <molecule id="A6H6A9-2"/>
    <property type="organism name" value="mouse"/>
</dbReference>
<dbReference type="AGR" id="MGI:1352507"/>
<dbReference type="CTD" id="9910"/>
<dbReference type="MGI" id="MGI:1352507">
    <property type="gene designation" value="Rabgap1l"/>
</dbReference>
<dbReference type="VEuPathDB" id="HostDB:ENSMUSG00000026721"/>
<dbReference type="eggNOG" id="KOG1102">
    <property type="taxonomic scope" value="Eukaryota"/>
</dbReference>
<dbReference type="GeneTree" id="ENSGT00940000154611"/>
<dbReference type="HOGENOM" id="CLU_022409_1_0_1"/>
<dbReference type="InParanoid" id="A6H6A9"/>
<dbReference type="OMA" id="XSDNELS"/>
<dbReference type="OrthoDB" id="295078at2759"/>
<dbReference type="PhylomeDB" id="A6H6A9"/>
<dbReference type="TreeFam" id="TF317184"/>
<dbReference type="BioGRID-ORCS" id="29809">
    <property type="hits" value="4 hits in 76 CRISPR screens"/>
</dbReference>
<dbReference type="ChiTaRS" id="Rabgap1l">
    <property type="organism name" value="mouse"/>
</dbReference>
<dbReference type="PRO" id="PR:A6H6A9"/>
<dbReference type="Proteomes" id="UP000000589">
    <property type="component" value="Chromosome 1"/>
</dbReference>
<dbReference type="RNAct" id="A6H6A9">
    <property type="molecule type" value="protein"/>
</dbReference>
<dbReference type="Bgee" id="ENSMUSG00000026721">
    <property type="expression patterns" value="Expressed in lumbar dorsal root ganglion and 247 other cell types or tissues"/>
</dbReference>
<dbReference type="ExpressionAtlas" id="A6H6A9">
    <property type="expression patterns" value="baseline and differential"/>
</dbReference>
<dbReference type="GO" id="GO:0005769">
    <property type="term" value="C:early endosome"/>
    <property type="evidence" value="ECO:0000266"/>
    <property type="project" value="MGI"/>
</dbReference>
<dbReference type="GO" id="GO:0005794">
    <property type="term" value="C:Golgi apparatus"/>
    <property type="evidence" value="ECO:0000266"/>
    <property type="project" value="MGI"/>
</dbReference>
<dbReference type="GO" id="GO:0005634">
    <property type="term" value="C:nucleus"/>
    <property type="evidence" value="ECO:0000266"/>
    <property type="project" value="MGI"/>
</dbReference>
<dbReference type="GO" id="GO:0005096">
    <property type="term" value="F:GTPase activator activity"/>
    <property type="evidence" value="ECO:0000266"/>
    <property type="project" value="MGI"/>
</dbReference>
<dbReference type="GO" id="GO:0006897">
    <property type="term" value="P:endocytosis"/>
    <property type="evidence" value="ECO:0007669"/>
    <property type="project" value="UniProtKB-KW"/>
</dbReference>
<dbReference type="GO" id="GO:0035855">
    <property type="term" value="P:megakaryocyte development"/>
    <property type="evidence" value="ECO:0000303"/>
    <property type="project" value="BHF-UCL"/>
</dbReference>
<dbReference type="GO" id="GO:0015031">
    <property type="term" value="P:protein transport"/>
    <property type="evidence" value="ECO:0007669"/>
    <property type="project" value="UniProtKB-KW"/>
</dbReference>
<dbReference type="GO" id="GO:0032880">
    <property type="term" value="P:regulation of protein localization"/>
    <property type="evidence" value="ECO:0000266"/>
    <property type="project" value="MGI"/>
</dbReference>
<dbReference type="CDD" id="cd01211">
    <property type="entry name" value="PTB_Rab6GAP"/>
    <property type="match status" value="1"/>
</dbReference>
<dbReference type="FunFam" id="1.10.10.750:FF:000004">
    <property type="entry name" value="Putative rab gtpase-activating protein 1"/>
    <property type="match status" value="1"/>
</dbReference>
<dbReference type="FunFam" id="1.10.472.80:FF:000007">
    <property type="entry name" value="Rab GTPase-activating protein 1 isoform X1"/>
    <property type="match status" value="1"/>
</dbReference>
<dbReference type="FunFam" id="2.30.29.30:FF:000202">
    <property type="entry name" value="rab GTPase-activating protein 1-like isoform X1"/>
    <property type="match status" value="1"/>
</dbReference>
<dbReference type="FunFam" id="1.10.8.270:FF:000001">
    <property type="entry name" value="TBC1 domain family member 1"/>
    <property type="match status" value="1"/>
</dbReference>
<dbReference type="Gene3D" id="2.30.29.30">
    <property type="entry name" value="Pleckstrin-homology domain (PH domain)/Phosphotyrosine-binding domain (PTB)"/>
    <property type="match status" value="1"/>
</dbReference>
<dbReference type="Gene3D" id="1.10.8.270">
    <property type="entry name" value="putative rabgap domain of human tbc1 domain family member 14 like domains"/>
    <property type="match status" value="1"/>
</dbReference>
<dbReference type="Gene3D" id="1.10.10.750">
    <property type="entry name" value="Ypt/Rab-GAP domain of gyp1p, domain 1"/>
    <property type="match status" value="1"/>
</dbReference>
<dbReference type="Gene3D" id="1.10.472.80">
    <property type="entry name" value="Ypt/Rab-GAP domain of gyp1p, domain 3"/>
    <property type="match status" value="1"/>
</dbReference>
<dbReference type="InterPro" id="IPR022164">
    <property type="entry name" value="Kinesin-like"/>
</dbReference>
<dbReference type="InterPro" id="IPR011993">
    <property type="entry name" value="PH-like_dom_sf"/>
</dbReference>
<dbReference type="InterPro" id="IPR006020">
    <property type="entry name" value="PTB/PI_dom"/>
</dbReference>
<dbReference type="InterPro" id="IPR000195">
    <property type="entry name" value="Rab-GAP-TBC_dom"/>
</dbReference>
<dbReference type="InterPro" id="IPR035969">
    <property type="entry name" value="Rab-GAP_TBC_sf"/>
</dbReference>
<dbReference type="InterPro" id="IPR050302">
    <property type="entry name" value="Rab_GAP_TBC_domain"/>
</dbReference>
<dbReference type="PANTHER" id="PTHR47219">
    <property type="entry name" value="RAB GTPASE-ACTIVATING PROTEIN 1-LIKE"/>
    <property type="match status" value="1"/>
</dbReference>
<dbReference type="PANTHER" id="PTHR47219:SF7">
    <property type="entry name" value="RAB GTPASE-ACTIVATING PROTEIN 1-LIKE"/>
    <property type="match status" value="1"/>
</dbReference>
<dbReference type="Pfam" id="PF12473">
    <property type="entry name" value="DUF3694"/>
    <property type="match status" value="1"/>
</dbReference>
<dbReference type="Pfam" id="PF00566">
    <property type="entry name" value="RabGAP-TBC"/>
    <property type="match status" value="1"/>
</dbReference>
<dbReference type="SMART" id="SM00462">
    <property type="entry name" value="PTB"/>
    <property type="match status" value="1"/>
</dbReference>
<dbReference type="SMART" id="SM00164">
    <property type="entry name" value="TBC"/>
    <property type="match status" value="1"/>
</dbReference>
<dbReference type="SUPFAM" id="SSF50729">
    <property type="entry name" value="PH domain-like"/>
    <property type="match status" value="1"/>
</dbReference>
<dbReference type="SUPFAM" id="SSF47923">
    <property type="entry name" value="Ypt/Rab-GAP domain of gyp1p"/>
    <property type="match status" value="2"/>
</dbReference>
<dbReference type="PROSITE" id="PS01179">
    <property type="entry name" value="PID"/>
    <property type="match status" value="1"/>
</dbReference>
<dbReference type="PROSITE" id="PS50086">
    <property type="entry name" value="TBC_RABGAP"/>
    <property type="match status" value="1"/>
</dbReference>
<feature type="chain" id="PRO_0000348055" description="Rab GTPase-activating protein 1-like">
    <location>
        <begin position="1"/>
        <end position="815"/>
    </location>
</feature>
<feature type="domain" description="PID" evidence="3">
    <location>
        <begin position="126"/>
        <end position="282"/>
    </location>
</feature>
<feature type="domain" description="Rab-GAP TBC" evidence="4">
    <location>
        <begin position="538"/>
        <end position="724"/>
    </location>
</feature>
<feature type="region of interest" description="Disordered" evidence="5">
    <location>
        <begin position="84"/>
        <end position="125"/>
    </location>
</feature>
<feature type="region of interest" description="Disordered" evidence="5">
    <location>
        <begin position="462"/>
        <end position="501"/>
    </location>
</feature>
<feature type="compositionally biased region" description="Low complexity" evidence="5">
    <location>
        <begin position="113"/>
        <end position="122"/>
    </location>
</feature>
<feature type="compositionally biased region" description="Acidic residues" evidence="5">
    <location>
        <begin position="482"/>
        <end position="492"/>
    </location>
</feature>
<feature type="site" description="Arginine finger" evidence="1">
    <location>
        <position position="580"/>
    </location>
</feature>
<feature type="site" description="Glutamine finger" evidence="1">
    <location>
        <position position="621"/>
    </location>
</feature>
<feature type="modified residue" description="Phosphothreonine" evidence="2">
    <location>
        <position position="471"/>
    </location>
</feature>
<feature type="modified residue" description="Phosphoserine" evidence="2">
    <location>
        <position position="480"/>
    </location>
</feature>
<feature type="modified residue" description="Phosphoserine" evidence="23">
    <location>
        <position position="490"/>
    </location>
</feature>
<feature type="splice variant" id="VSP_052925" description="In isoform 4." evidence="12">
    <location>
        <begin position="1"/>
        <end position="743"/>
    </location>
</feature>
<feature type="splice variant" id="VSP_052926" description="In isoform 3." evidence="11 13">
    <location>
        <begin position="1"/>
        <end position="681"/>
    </location>
</feature>
<feature type="splice variant" id="VSP_052927" description="In isoform 2." evidence="13">
    <original>MEVRASFQKVSGSSDSVATLNSEEFVLVSQ</original>
    <variation>ME</variation>
    <location>
        <begin position="1"/>
        <end position="30"/>
    </location>
</feature>
<feature type="splice variant" id="VSP_052928" description="In isoform 2." evidence="13">
    <original>ESDNELSSGTGDVSKDC</original>
    <variation>DPGHASPDTVGFLTLFL</variation>
    <location>
        <begin position="489"/>
        <end position="505"/>
    </location>
</feature>
<feature type="splice variant" id="VSP_052929" description="In isoform 2." evidence="13">
    <location>
        <begin position="506"/>
        <end position="815"/>
    </location>
</feature>
<feature type="splice variant" id="VSP_052930" description="In isoform 3." evidence="11 13">
    <original>YSHFCDLNLEAHMYASQWFLTLFTAKFPLCMVFHIIDLLLCEGLNIIFHVALALLK</original>
    <variation>MEEGVPCPAPAAKLTPPVKKSQDMHDERSKLVNEYACRVLELLGMGHRLFVPRLLA</variation>
    <location>
        <begin position="682"/>
        <end position="737"/>
    </location>
</feature>
<feature type="splice variant" id="VSP_052931" description="In isoform 4." evidence="12">
    <original>LQADFEGALKFFRVQLPKRYRAEENARRLMEQACNIK</original>
    <variation>MMEEISIMVAYDAHVFSQLHDEDFLTSLVATSKPRSM</variation>
    <location>
        <begin position="744"/>
        <end position="780"/>
    </location>
</feature>
<feature type="splice variant" id="VSP_052932" description="In isoform 3." evidence="11 13">
    <original>FVYL</original>
    <variation>RENRRLQEASMRLEQENDDLAHELVTSKIALRNDLDQAEDKADVLNKELLFTKQRLVETEEEKRKQEEETAQLKEVFRKQLEKAEYEIKKTTAIIAEYKQICSQLSTRLEKQQAASKEELEAVKGKMMACKHCSDIFSKEGALKPVAVNREDQGLEADDEKDSLKKQLREMELELAQTKLQLVEAKCKIQELEHQRGALMNEIQAAKNSWFSKTLNSIKTATGTQPLQPPQAPQPPKEST</variation>
    <location>
        <begin position="812"/>
        <end position="815"/>
    </location>
</feature>
<feature type="mutagenesis site" description="Loss GTPase-activating (GAP) activity." evidence="10">
    <original>R</original>
    <variation>A</variation>
    <location>
        <position position="584"/>
    </location>
</feature>
<feature type="mutagenesis site" description="Loss of interaction with ANK2. Loss of colocalization and cotransportation on motile vesicles with ANK2." evidence="10">
    <original>KK</original>
    <variation>EE</variation>
    <location>
        <begin position="784"/>
        <end position="785"/>
    </location>
</feature>
<feature type="sequence conflict" description="In Ref. 3; AAF24092." evidence="14" ref="3">
    <original>R</original>
    <variation>G</variation>
    <location>
        <position position="4"/>
    </location>
</feature>
<feature type="sequence conflict" description="In Ref. 1; BAC29189." evidence="14" ref="1">
    <original>S</original>
    <variation>C</variation>
    <location>
        <position position="108"/>
    </location>
</feature>
<feature type="sequence conflict" description="In Ref. 3; AAF24092." evidence="14" ref="3">
    <original>G</original>
    <variation>E</variation>
    <location>
        <position position="208"/>
    </location>
</feature>
<feature type="sequence conflict" description="In Ref. 3; AAF24092." evidence="14" ref="3">
    <original>F</original>
    <variation>I</variation>
    <location>
        <position position="303"/>
    </location>
</feature>
<feature type="sequence conflict" description="In Ref. 3; AAF24092." evidence="14" ref="3">
    <original>PKD</original>
    <variation>LSQ</variation>
    <location>
        <begin position="384"/>
        <end position="386"/>
    </location>
</feature>